<comment type="function">
    <text evidence="2">With S4 and S5 plays an important role in translational accuracy.</text>
</comment>
<comment type="function">
    <text evidence="2">Interacts with and stabilizes bases of the 16S rRNA that are involved in tRNA selection in the A site and with the mRNA backbone. Located at the interface of the 30S and 50S subunits, it traverses the body of the 30S subunit contacting proteins on the other side and probably holding the rRNA structure together. The combined cluster of proteins S8, S12 and S17 appears to hold together the shoulder and platform of the 30S subunit.</text>
</comment>
<comment type="subunit">
    <text evidence="2">Part of the 30S ribosomal subunit. Contacts proteins S8 and S17. May interact with IF1 in the 30S initiation complex.</text>
</comment>
<comment type="similarity">
    <text evidence="2">Belongs to the universal ribosomal protein uS12 family.</text>
</comment>
<protein>
    <recommendedName>
        <fullName evidence="2">Small ribosomal subunit protein uS12</fullName>
    </recommendedName>
    <alternativeName>
        <fullName evidence="4">30S ribosomal protein S12</fullName>
    </alternativeName>
</protein>
<organism>
    <name type="scientific">Cereibacter sphaeroides (strain ATCC 17029 / ATH 2.4.9)</name>
    <name type="common">Rhodobacter sphaeroides</name>
    <dbReference type="NCBI Taxonomy" id="349101"/>
    <lineage>
        <taxon>Bacteria</taxon>
        <taxon>Pseudomonadati</taxon>
        <taxon>Pseudomonadota</taxon>
        <taxon>Alphaproteobacteria</taxon>
        <taxon>Rhodobacterales</taxon>
        <taxon>Paracoccaceae</taxon>
        <taxon>Cereibacter</taxon>
    </lineage>
</organism>
<sequence>MPTIQQLIRKPREPKRVRSKSQHLESCPQKRGVCTRVYTTTPKKPNSAMRKVAKVRLTNGFEVISYIPGEKHNLQEHSVVLIRGGRVKDLPGVRYHILRGVLDTQGVKDRRQRRSKYGAKRPK</sequence>
<dbReference type="EMBL" id="CP000577">
    <property type="protein sequence ID" value="ABN75458.1"/>
    <property type="molecule type" value="Genomic_DNA"/>
</dbReference>
<dbReference type="EMBL" id="CP000577">
    <property type="protein sequence ID" value="ABN75472.1"/>
    <property type="molecule type" value="Genomic_DNA"/>
</dbReference>
<dbReference type="SMR" id="A3PGJ2"/>
<dbReference type="KEGG" id="rsh:Rsph17029_0342"/>
<dbReference type="KEGG" id="rsh:Rsph17029_0356"/>
<dbReference type="HOGENOM" id="CLU_104295_1_2_5"/>
<dbReference type="GO" id="GO:0015935">
    <property type="term" value="C:small ribosomal subunit"/>
    <property type="evidence" value="ECO:0007669"/>
    <property type="project" value="InterPro"/>
</dbReference>
<dbReference type="GO" id="GO:0019843">
    <property type="term" value="F:rRNA binding"/>
    <property type="evidence" value="ECO:0007669"/>
    <property type="project" value="UniProtKB-UniRule"/>
</dbReference>
<dbReference type="GO" id="GO:0003735">
    <property type="term" value="F:structural constituent of ribosome"/>
    <property type="evidence" value="ECO:0007669"/>
    <property type="project" value="InterPro"/>
</dbReference>
<dbReference type="GO" id="GO:0000049">
    <property type="term" value="F:tRNA binding"/>
    <property type="evidence" value="ECO:0007669"/>
    <property type="project" value="UniProtKB-UniRule"/>
</dbReference>
<dbReference type="GO" id="GO:0006412">
    <property type="term" value="P:translation"/>
    <property type="evidence" value="ECO:0007669"/>
    <property type="project" value="UniProtKB-UniRule"/>
</dbReference>
<dbReference type="CDD" id="cd03368">
    <property type="entry name" value="Ribosomal_S12"/>
    <property type="match status" value="1"/>
</dbReference>
<dbReference type="FunFam" id="2.40.50.140:FF:000001">
    <property type="entry name" value="30S ribosomal protein S12"/>
    <property type="match status" value="1"/>
</dbReference>
<dbReference type="Gene3D" id="2.40.50.140">
    <property type="entry name" value="Nucleic acid-binding proteins"/>
    <property type="match status" value="1"/>
</dbReference>
<dbReference type="HAMAP" id="MF_00403_B">
    <property type="entry name" value="Ribosomal_uS12_B"/>
    <property type="match status" value="1"/>
</dbReference>
<dbReference type="InterPro" id="IPR012340">
    <property type="entry name" value="NA-bd_OB-fold"/>
</dbReference>
<dbReference type="InterPro" id="IPR006032">
    <property type="entry name" value="Ribosomal_uS12"/>
</dbReference>
<dbReference type="InterPro" id="IPR005679">
    <property type="entry name" value="Ribosomal_uS12_bac"/>
</dbReference>
<dbReference type="NCBIfam" id="TIGR00981">
    <property type="entry name" value="rpsL_bact"/>
    <property type="match status" value="1"/>
</dbReference>
<dbReference type="PANTHER" id="PTHR11652">
    <property type="entry name" value="30S RIBOSOMAL PROTEIN S12 FAMILY MEMBER"/>
    <property type="match status" value="1"/>
</dbReference>
<dbReference type="Pfam" id="PF00164">
    <property type="entry name" value="Ribosom_S12_S23"/>
    <property type="match status" value="1"/>
</dbReference>
<dbReference type="PIRSF" id="PIRSF002133">
    <property type="entry name" value="Ribosomal_S12/S23"/>
    <property type="match status" value="1"/>
</dbReference>
<dbReference type="PRINTS" id="PR01034">
    <property type="entry name" value="RIBOSOMALS12"/>
</dbReference>
<dbReference type="SUPFAM" id="SSF50249">
    <property type="entry name" value="Nucleic acid-binding proteins"/>
    <property type="match status" value="1"/>
</dbReference>
<dbReference type="PROSITE" id="PS00055">
    <property type="entry name" value="RIBOSOMAL_S12"/>
    <property type="match status" value="1"/>
</dbReference>
<name>RS12_CERS1</name>
<reference key="1">
    <citation type="submission" date="2007-02" db="EMBL/GenBank/DDBJ databases">
        <title>Complete sequence of chromosome 1 of Rhodobacter sphaeroides ATCC 17029.</title>
        <authorList>
            <person name="Copeland A."/>
            <person name="Lucas S."/>
            <person name="Lapidus A."/>
            <person name="Barry K."/>
            <person name="Detter J.C."/>
            <person name="Glavina del Rio T."/>
            <person name="Hammon N."/>
            <person name="Israni S."/>
            <person name="Dalin E."/>
            <person name="Tice H."/>
            <person name="Pitluck S."/>
            <person name="Kiss H."/>
            <person name="Brettin T."/>
            <person name="Bruce D."/>
            <person name="Han C."/>
            <person name="Tapia R."/>
            <person name="Gilna P."/>
            <person name="Schmutz J."/>
            <person name="Larimer F."/>
            <person name="Land M."/>
            <person name="Hauser L."/>
            <person name="Kyrpides N."/>
            <person name="Mikhailova N."/>
            <person name="Richardson P."/>
            <person name="Mackenzie C."/>
            <person name="Choudhary M."/>
            <person name="Donohue T.J."/>
            <person name="Kaplan S."/>
        </authorList>
    </citation>
    <scope>NUCLEOTIDE SEQUENCE [LARGE SCALE GENOMIC DNA]</scope>
    <source>
        <strain>ATCC 17029 / ATH 2.4.9</strain>
    </source>
</reference>
<evidence type="ECO:0000250" key="1"/>
<evidence type="ECO:0000255" key="2">
    <source>
        <dbReference type="HAMAP-Rule" id="MF_00403"/>
    </source>
</evidence>
<evidence type="ECO:0000256" key="3">
    <source>
        <dbReference type="SAM" id="MobiDB-lite"/>
    </source>
</evidence>
<evidence type="ECO:0000305" key="4"/>
<keyword id="KW-0488">Methylation</keyword>
<keyword id="KW-0687">Ribonucleoprotein</keyword>
<keyword id="KW-0689">Ribosomal protein</keyword>
<keyword id="KW-0694">RNA-binding</keyword>
<keyword id="KW-0699">rRNA-binding</keyword>
<keyword id="KW-0820">tRNA-binding</keyword>
<proteinExistence type="inferred from homology"/>
<gene>
    <name evidence="2" type="primary">rpsL1</name>
    <name type="ordered locus">Rsph17029_0342</name>
</gene>
<gene>
    <name evidence="2" type="primary">rpsL2</name>
    <name type="ordered locus">Rsph17029_0356</name>
</gene>
<feature type="chain" id="PRO_0000296023" description="Small ribosomal subunit protein uS12">
    <location>
        <begin position="1"/>
        <end position="123"/>
    </location>
</feature>
<feature type="region of interest" description="Disordered" evidence="3">
    <location>
        <begin position="1"/>
        <end position="28"/>
    </location>
</feature>
<feature type="modified residue" description="3-methylthioaspartic acid" evidence="1">
    <location>
        <position position="89"/>
    </location>
</feature>
<accession>A3PGJ2</accession>